<protein>
    <recommendedName>
        <fullName evidence="1">Protein Ves</fullName>
    </recommendedName>
</protein>
<gene>
    <name evidence="1" type="primary">ves</name>
    <name type="ordered locus">ECDH10B_1880</name>
</gene>
<name>VES_ECODH</name>
<feature type="chain" id="PRO_1000201499" description="Protein Ves">
    <location>
        <begin position="1"/>
        <end position="191"/>
    </location>
</feature>
<organism>
    <name type="scientific">Escherichia coli (strain K12 / DH10B)</name>
    <dbReference type="NCBI Taxonomy" id="316385"/>
    <lineage>
        <taxon>Bacteria</taxon>
        <taxon>Pseudomonadati</taxon>
        <taxon>Pseudomonadota</taxon>
        <taxon>Gammaproteobacteria</taxon>
        <taxon>Enterobacterales</taxon>
        <taxon>Enterobacteriaceae</taxon>
        <taxon>Escherichia</taxon>
    </lineage>
</organism>
<evidence type="ECO:0000255" key="1">
    <source>
        <dbReference type="HAMAP-Rule" id="MF_01591"/>
    </source>
</evidence>
<sequence length="191" mass="21577">MEYFDMRKMSVNLWRNAAGETREICTFPPAKRDFYWRASIASIAANGEFSLFPGMERIVTLLEGGEMLLESADRFNHTLKPFQPFAFAADQVVKAKLTAGQMSMDFNIMTRLDVCKAKVRIAERTFTTFGSRGGVVFVINGAWQLGDKLLTTDQGACWFDGRHTLRLLQPQGKLLFSEINWLAGHSPDQVQ</sequence>
<accession>B1XGK3</accession>
<proteinExistence type="inferred from homology"/>
<dbReference type="EMBL" id="CP000948">
    <property type="protein sequence ID" value="ACB02941.1"/>
    <property type="molecule type" value="Genomic_DNA"/>
</dbReference>
<dbReference type="RefSeq" id="WP_001300480.1">
    <property type="nucleotide sequence ID" value="NC_010473.1"/>
</dbReference>
<dbReference type="SMR" id="B1XGK3"/>
<dbReference type="KEGG" id="ecd:ECDH10B_1880"/>
<dbReference type="HOGENOM" id="CLU_090931_5_0_6"/>
<dbReference type="CDD" id="cd20293">
    <property type="entry name" value="cupin_HutD_N"/>
    <property type="match status" value="1"/>
</dbReference>
<dbReference type="Gene3D" id="2.60.120.10">
    <property type="entry name" value="Jelly Rolls"/>
    <property type="match status" value="1"/>
</dbReference>
<dbReference type="HAMAP" id="MF_01591">
    <property type="entry name" value="Ves"/>
    <property type="match status" value="1"/>
</dbReference>
<dbReference type="InterPro" id="IPR014710">
    <property type="entry name" value="RmlC-like_jellyroll"/>
</dbReference>
<dbReference type="InterPro" id="IPR011051">
    <property type="entry name" value="RmlC_Cupin_sf"/>
</dbReference>
<dbReference type="InterPro" id="IPR010282">
    <property type="entry name" value="Uncharacterised_HutD/Ves"/>
</dbReference>
<dbReference type="InterPro" id="IPR023482">
    <property type="entry name" value="Uncharacterised_Ves"/>
</dbReference>
<dbReference type="NCBIfam" id="NF008488">
    <property type="entry name" value="PRK11396.1"/>
    <property type="match status" value="1"/>
</dbReference>
<dbReference type="PANTHER" id="PTHR37943">
    <property type="entry name" value="PROTEIN VES"/>
    <property type="match status" value="1"/>
</dbReference>
<dbReference type="PANTHER" id="PTHR37943:SF1">
    <property type="entry name" value="PROTEIN VES"/>
    <property type="match status" value="1"/>
</dbReference>
<dbReference type="Pfam" id="PF05962">
    <property type="entry name" value="HutD"/>
    <property type="match status" value="1"/>
</dbReference>
<dbReference type="SUPFAM" id="SSF51182">
    <property type="entry name" value="RmlC-like cupins"/>
    <property type="match status" value="1"/>
</dbReference>
<reference key="1">
    <citation type="journal article" date="2008" name="J. Bacteriol.">
        <title>The complete genome sequence of Escherichia coli DH10B: insights into the biology of a laboratory workhorse.</title>
        <authorList>
            <person name="Durfee T."/>
            <person name="Nelson R."/>
            <person name="Baldwin S."/>
            <person name="Plunkett G. III"/>
            <person name="Burland V."/>
            <person name="Mau B."/>
            <person name="Petrosino J.F."/>
            <person name="Qin X."/>
            <person name="Muzny D.M."/>
            <person name="Ayele M."/>
            <person name="Gibbs R.A."/>
            <person name="Csorgo B."/>
            <person name="Posfai G."/>
            <person name="Weinstock G.M."/>
            <person name="Blattner F.R."/>
        </authorList>
    </citation>
    <scope>NUCLEOTIDE SEQUENCE [LARGE SCALE GENOMIC DNA]</scope>
    <source>
        <strain>K12 / DH10B</strain>
    </source>
</reference>
<comment type="similarity">
    <text evidence="1">Belongs to the Ves family.</text>
</comment>